<organism>
    <name type="scientific">Escherichia coli (strain K12 / MC4100 / BW2952)</name>
    <dbReference type="NCBI Taxonomy" id="595496"/>
    <lineage>
        <taxon>Bacteria</taxon>
        <taxon>Pseudomonadati</taxon>
        <taxon>Pseudomonadota</taxon>
        <taxon>Gammaproteobacteria</taxon>
        <taxon>Enterobacterales</taxon>
        <taxon>Enterobacteriaceae</taxon>
        <taxon>Escherichia</taxon>
    </lineage>
</organism>
<feature type="chain" id="PRO_1000203967" description="Sulfur carrier protein FdhD">
    <location>
        <begin position="1"/>
        <end position="277"/>
    </location>
</feature>
<feature type="active site" description="Cysteine persulfide intermediate" evidence="1">
    <location>
        <position position="121"/>
    </location>
</feature>
<feature type="binding site" evidence="1">
    <location>
        <begin position="260"/>
        <end position="265"/>
    </location>
    <ligand>
        <name>Mo-bis(molybdopterin guanine dinucleotide)</name>
        <dbReference type="ChEBI" id="CHEBI:60539"/>
    </ligand>
</feature>
<proteinExistence type="inferred from homology"/>
<sequence>MKKTQRKEIENVTNITGVRQIELWRRDDLQHPRLDEVAEEVPVALVYNGISHVVMMASPKDLEYFALGFSLSEGIIESPRDIFGMDVVPSCNGLEVQIELSSRRFMGLKERRRALAGRTGCGVCGVEQLNDIGKPVQPLPFTQTFDLNKLDDALRHLNDFQPVGQLTGCTHAAAWMLPSGELVGGHEDVGRHVALDKLLGRRSQEGESWQQGAVLVSSRASYEMVQKSAMCGVEILFAVSAATTLAVEVAERCNLTLVGFCKPGRATVYTHPQRLSN</sequence>
<keyword id="KW-0963">Cytoplasm</keyword>
<keyword id="KW-0501">Molybdenum cofactor biosynthesis</keyword>
<reference key="1">
    <citation type="journal article" date="2009" name="J. Bacteriol.">
        <title>Genomic sequencing reveals regulatory mutations and recombinational events in the widely used MC4100 lineage of Escherichia coli K-12.</title>
        <authorList>
            <person name="Ferenci T."/>
            <person name="Zhou Z."/>
            <person name="Betteridge T."/>
            <person name="Ren Y."/>
            <person name="Liu Y."/>
            <person name="Feng L."/>
            <person name="Reeves P.R."/>
            <person name="Wang L."/>
        </authorList>
    </citation>
    <scope>NUCLEOTIDE SEQUENCE [LARGE SCALE GENOMIC DNA]</scope>
    <source>
        <strain>K12 / MC4100 / BW2952</strain>
    </source>
</reference>
<accession>C5A063</accession>
<evidence type="ECO:0000255" key="1">
    <source>
        <dbReference type="HAMAP-Rule" id="MF_00187"/>
    </source>
</evidence>
<comment type="function">
    <text evidence="1">Required for formate dehydrogenase (FDH) activity. Acts as a sulfur carrier protein that transfers sulfur from IscS to the molybdenum cofactor prior to its insertion into FDH.</text>
</comment>
<comment type="subcellular location">
    <subcellularLocation>
        <location evidence="1">Cytoplasm</location>
    </subcellularLocation>
</comment>
<comment type="similarity">
    <text evidence="1">Belongs to the FdhD family.</text>
</comment>
<gene>
    <name evidence="1" type="primary">fdhD</name>
    <name type="ordered locus">BWG_3565</name>
</gene>
<protein>
    <recommendedName>
        <fullName evidence="1">Sulfur carrier protein FdhD</fullName>
    </recommendedName>
</protein>
<name>FDHD_ECOBW</name>
<dbReference type="EMBL" id="CP001396">
    <property type="protein sequence ID" value="ACR63125.1"/>
    <property type="molecule type" value="Genomic_DNA"/>
</dbReference>
<dbReference type="RefSeq" id="WP_000753617.1">
    <property type="nucleotide sequence ID" value="NC_012759.1"/>
</dbReference>
<dbReference type="SMR" id="C5A063"/>
<dbReference type="GeneID" id="93778043"/>
<dbReference type="KEGG" id="ebw:BWG_3565"/>
<dbReference type="HOGENOM" id="CLU_056887_2_0_6"/>
<dbReference type="GO" id="GO:0005737">
    <property type="term" value="C:cytoplasm"/>
    <property type="evidence" value="ECO:0007669"/>
    <property type="project" value="UniProtKB-SubCell"/>
</dbReference>
<dbReference type="GO" id="GO:0097163">
    <property type="term" value="F:sulfur carrier activity"/>
    <property type="evidence" value="ECO:0007669"/>
    <property type="project" value="UniProtKB-UniRule"/>
</dbReference>
<dbReference type="GO" id="GO:0016783">
    <property type="term" value="F:sulfurtransferase activity"/>
    <property type="evidence" value="ECO:0007669"/>
    <property type="project" value="InterPro"/>
</dbReference>
<dbReference type="GO" id="GO:0006777">
    <property type="term" value="P:Mo-molybdopterin cofactor biosynthetic process"/>
    <property type="evidence" value="ECO:0007669"/>
    <property type="project" value="UniProtKB-UniRule"/>
</dbReference>
<dbReference type="FunFam" id="3.10.20.10:FF:000003">
    <property type="entry name" value="Sulfur carrier protein FdhD"/>
    <property type="match status" value="1"/>
</dbReference>
<dbReference type="FunFam" id="3.40.140.10:FF:000027">
    <property type="entry name" value="Sulfur carrier protein FdhD"/>
    <property type="match status" value="1"/>
</dbReference>
<dbReference type="Gene3D" id="3.10.20.10">
    <property type="match status" value="1"/>
</dbReference>
<dbReference type="Gene3D" id="3.40.140.10">
    <property type="entry name" value="Cytidine Deaminase, domain 2"/>
    <property type="match status" value="1"/>
</dbReference>
<dbReference type="HAMAP" id="MF_00187">
    <property type="entry name" value="FdhD"/>
    <property type="match status" value="1"/>
</dbReference>
<dbReference type="InterPro" id="IPR016193">
    <property type="entry name" value="Cytidine_deaminase-like"/>
</dbReference>
<dbReference type="InterPro" id="IPR003786">
    <property type="entry name" value="FdhD"/>
</dbReference>
<dbReference type="NCBIfam" id="TIGR00129">
    <property type="entry name" value="fdhD_narQ"/>
    <property type="match status" value="1"/>
</dbReference>
<dbReference type="PANTHER" id="PTHR30592">
    <property type="entry name" value="FORMATE DEHYDROGENASE"/>
    <property type="match status" value="1"/>
</dbReference>
<dbReference type="PANTHER" id="PTHR30592:SF1">
    <property type="entry name" value="SULFUR CARRIER PROTEIN FDHD"/>
    <property type="match status" value="1"/>
</dbReference>
<dbReference type="Pfam" id="PF02634">
    <property type="entry name" value="FdhD-NarQ"/>
    <property type="match status" value="1"/>
</dbReference>
<dbReference type="PIRSF" id="PIRSF015626">
    <property type="entry name" value="FdhD"/>
    <property type="match status" value="1"/>
</dbReference>
<dbReference type="SUPFAM" id="SSF53927">
    <property type="entry name" value="Cytidine deaminase-like"/>
    <property type="match status" value="1"/>
</dbReference>